<feature type="chain" id="PRO_0000156259" description="Phosphopantetheine adenylyltransferase">
    <location>
        <begin position="1"/>
        <end position="161"/>
    </location>
</feature>
<feature type="binding site" evidence="1">
    <location>
        <begin position="9"/>
        <end position="10"/>
    </location>
    <ligand>
        <name>ATP</name>
        <dbReference type="ChEBI" id="CHEBI:30616"/>
    </ligand>
</feature>
<feature type="binding site" evidence="1">
    <location>
        <position position="9"/>
    </location>
    <ligand>
        <name>substrate</name>
    </ligand>
</feature>
<feature type="binding site" evidence="1">
    <location>
        <position position="17"/>
    </location>
    <ligand>
        <name>ATP</name>
        <dbReference type="ChEBI" id="CHEBI:30616"/>
    </ligand>
</feature>
<feature type="binding site" evidence="1">
    <location>
        <position position="41"/>
    </location>
    <ligand>
        <name>substrate</name>
    </ligand>
</feature>
<feature type="binding site" evidence="1">
    <location>
        <position position="73"/>
    </location>
    <ligand>
        <name>substrate</name>
    </ligand>
</feature>
<feature type="binding site" evidence="1">
    <location>
        <position position="87"/>
    </location>
    <ligand>
        <name>substrate</name>
    </ligand>
</feature>
<feature type="binding site" evidence="1">
    <location>
        <begin position="88"/>
        <end position="90"/>
    </location>
    <ligand>
        <name>ATP</name>
        <dbReference type="ChEBI" id="CHEBI:30616"/>
    </ligand>
</feature>
<feature type="binding site" evidence="1">
    <location>
        <position position="98"/>
    </location>
    <ligand>
        <name>ATP</name>
        <dbReference type="ChEBI" id="CHEBI:30616"/>
    </ligand>
</feature>
<feature type="binding site" evidence="1">
    <location>
        <begin position="123"/>
        <end position="129"/>
    </location>
    <ligand>
        <name>ATP</name>
        <dbReference type="ChEBI" id="CHEBI:30616"/>
    </ligand>
</feature>
<feature type="site" description="Transition state stabilizer" evidence="1">
    <location>
        <position position="17"/>
    </location>
</feature>
<accession>Q88CQ7</accession>
<keyword id="KW-0067">ATP-binding</keyword>
<keyword id="KW-0173">Coenzyme A biosynthesis</keyword>
<keyword id="KW-0963">Cytoplasm</keyword>
<keyword id="KW-0460">Magnesium</keyword>
<keyword id="KW-0547">Nucleotide-binding</keyword>
<keyword id="KW-0548">Nucleotidyltransferase</keyword>
<keyword id="KW-1185">Reference proteome</keyword>
<keyword id="KW-0808">Transferase</keyword>
<proteinExistence type="inferred from homology"/>
<reference key="1">
    <citation type="journal article" date="2002" name="Environ. Microbiol.">
        <title>Complete genome sequence and comparative analysis of the metabolically versatile Pseudomonas putida KT2440.</title>
        <authorList>
            <person name="Nelson K.E."/>
            <person name="Weinel C."/>
            <person name="Paulsen I.T."/>
            <person name="Dodson R.J."/>
            <person name="Hilbert H."/>
            <person name="Martins dos Santos V.A.P."/>
            <person name="Fouts D.E."/>
            <person name="Gill S.R."/>
            <person name="Pop M."/>
            <person name="Holmes M."/>
            <person name="Brinkac L.M."/>
            <person name="Beanan M.J."/>
            <person name="DeBoy R.T."/>
            <person name="Daugherty S.C."/>
            <person name="Kolonay J.F."/>
            <person name="Madupu R."/>
            <person name="Nelson W.C."/>
            <person name="White O."/>
            <person name="Peterson J.D."/>
            <person name="Khouri H.M."/>
            <person name="Hance I."/>
            <person name="Chris Lee P."/>
            <person name="Holtzapple E.K."/>
            <person name="Scanlan D."/>
            <person name="Tran K."/>
            <person name="Moazzez A."/>
            <person name="Utterback T.R."/>
            <person name="Rizzo M."/>
            <person name="Lee K."/>
            <person name="Kosack D."/>
            <person name="Moestl D."/>
            <person name="Wedler H."/>
            <person name="Lauber J."/>
            <person name="Stjepandic D."/>
            <person name="Hoheisel J."/>
            <person name="Straetz M."/>
            <person name="Heim S."/>
            <person name="Kiewitz C."/>
            <person name="Eisen J.A."/>
            <person name="Timmis K.N."/>
            <person name="Duesterhoeft A."/>
            <person name="Tuemmler B."/>
            <person name="Fraser C.M."/>
        </authorList>
    </citation>
    <scope>NUCLEOTIDE SEQUENCE [LARGE SCALE GENOMIC DNA]</scope>
    <source>
        <strain>ATCC 47054 / DSM 6125 / CFBP 8728 / NCIMB 11950 / KT2440</strain>
    </source>
</reference>
<gene>
    <name evidence="1" type="primary">coaD</name>
    <name type="ordered locus">PP_5123</name>
</gene>
<evidence type="ECO:0000255" key="1">
    <source>
        <dbReference type="HAMAP-Rule" id="MF_00151"/>
    </source>
</evidence>
<dbReference type="EC" id="2.7.7.3" evidence="1"/>
<dbReference type="EMBL" id="AE015451">
    <property type="protein sequence ID" value="AAN70688.1"/>
    <property type="molecule type" value="Genomic_DNA"/>
</dbReference>
<dbReference type="RefSeq" id="NP_747224.1">
    <property type="nucleotide sequence ID" value="NC_002947.4"/>
</dbReference>
<dbReference type="RefSeq" id="WP_010955660.1">
    <property type="nucleotide sequence ID" value="NZ_CP169744.1"/>
</dbReference>
<dbReference type="SMR" id="Q88CQ7"/>
<dbReference type="STRING" id="160488.PP_5123"/>
<dbReference type="PaxDb" id="160488-PP_5123"/>
<dbReference type="GeneID" id="83682858"/>
<dbReference type="KEGG" id="ppu:PP_5123"/>
<dbReference type="PATRIC" id="fig|160488.4.peg.5468"/>
<dbReference type="eggNOG" id="COG0669">
    <property type="taxonomic scope" value="Bacteria"/>
</dbReference>
<dbReference type="HOGENOM" id="CLU_100149_0_1_6"/>
<dbReference type="OrthoDB" id="9806661at2"/>
<dbReference type="PhylomeDB" id="Q88CQ7"/>
<dbReference type="BioCyc" id="PPUT160488:G1G01-5467-MONOMER"/>
<dbReference type="UniPathway" id="UPA00241">
    <property type="reaction ID" value="UER00355"/>
</dbReference>
<dbReference type="Proteomes" id="UP000000556">
    <property type="component" value="Chromosome"/>
</dbReference>
<dbReference type="GO" id="GO:0005737">
    <property type="term" value="C:cytoplasm"/>
    <property type="evidence" value="ECO:0007669"/>
    <property type="project" value="UniProtKB-SubCell"/>
</dbReference>
<dbReference type="GO" id="GO:0005524">
    <property type="term" value="F:ATP binding"/>
    <property type="evidence" value="ECO:0007669"/>
    <property type="project" value="UniProtKB-KW"/>
</dbReference>
<dbReference type="GO" id="GO:0004595">
    <property type="term" value="F:pantetheine-phosphate adenylyltransferase activity"/>
    <property type="evidence" value="ECO:0007669"/>
    <property type="project" value="UniProtKB-UniRule"/>
</dbReference>
<dbReference type="GO" id="GO:0015937">
    <property type="term" value="P:coenzyme A biosynthetic process"/>
    <property type="evidence" value="ECO:0007669"/>
    <property type="project" value="UniProtKB-UniRule"/>
</dbReference>
<dbReference type="CDD" id="cd02163">
    <property type="entry name" value="PPAT"/>
    <property type="match status" value="1"/>
</dbReference>
<dbReference type="Gene3D" id="3.40.50.620">
    <property type="entry name" value="HUPs"/>
    <property type="match status" value="1"/>
</dbReference>
<dbReference type="HAMAP" id="MF_00151">
    <property type="entry name" value="PPAT_bact"/>
    <property type="match status" value="1"/>
</dbReference>
<dbReference type="InterPro" id="IPR004821">
    <property type="entry name" value="Cyt_trans-like"/>
</dbReference>
<dbReference type="InterPro" id="IPR001980">
    <property type="entry name" value="PPAT"/>
</dbReference>
<dbReference type="InterPro" id="IPR014729">
    <property type="entry name" value="Rossmann-like_a/b/a_fold"/>
</dbReference>
<dbReference type="NCBIfam" id="TIGR01510">
    <property type="entry name" value="coaD_prev_kdtB"/>
    <property type="match status" value="1"/>
</dbReference>
<dbReference type="NCBIfam" id="TIGR00125">
    <property type="entry name" value="cyt_tran_rel"/>
    <property type="match status" value="1"/>
</dbReference>
<dbReference type="PANTHER" id="PTHR21342">
    <property type="entry name" value="PHOSPHOPANTETHEINE ADENYLYLTRANSFERASE"/>
    <property type="match status" value="1"/>
</dbReference>
<dbReference type="PANTHER" id="PTHR21342:SF1">
    <property type="entry name" value="PHOSPHOPANTETHEINE ADENYLYLTRANSFERASE"/>
    <property type="match status" value="1"/>
</dbReference>
<dbReference type="Pfam" id="PF01467">
    <property type="entry name" value="CTP_transf_like"/>
    <property type="match status" value="1"/>
</dbReference>
<dbReference type="PRINTS" id="PR01020">
    <property type="entry name" value="LPSBIOSNTHSS"/>
</dbReference>
<dbReference type="SUPFAM" id="SSF52374">
    <property type="entry name" value="Nucleotidylyl transferase"/>
    <property type="match status" value="1"/>
</dbReference>
<organism>
    <name type="scientific">Pseudomonas putida (strain ATCC 47054 / DSM 6125 / CFBP 8728 / NCIMB 11950 / KT2440)</name>
    <dbReference type="NCBI Taxonomy" id="160488"/>
    <lineage>
        <taxon>Bacteria</taxon>
        <taxon>Pseudomonadati</taxon>
        <taxon>Pseudomonadota</taxon>
        <taxon>Gammaproteobacteria</taxon>
        <taxon>Pseudomonadales</taxon>
        <taxon>Pseudomonadaceae</taxon>
        <taxon>Pseudomonas</taxon>
    </lineage>
</organism>
<comment type="function">
    <text evidence="1">Reversibly transfers an adenylyl group from ATP to 4'-phosphopantetheine, yielding dephospho-CoA (dPCoA) and pyrophosphate.</text>
</comment>
<comment type="catalytic activity">
    <reaction evidence="1">
        <text>(R)-4'-phosphopantetheine + ATP + H(+) = 3'-dephospho-CoA + diphosphate</text>
        <dbReference type="Rhea" id="RHEA:19801"/>
        <dbReference type="ChEBI" id="CHEBI:15378"/>
        <dbReference type="ChEBI" id="CHEBI:30616"/>
        <dbReference type="ChEBI" id="CHEBI:33019"/>
        <dbReference type="ChEBI" id="CHEBI:57328"/>
        <dbReference type="ChEBI" id="CHEBI:61723"/>
        <dbReference type="EC" id="2.7.7.3"/>
    </reaction>
</comment>
<comment type="cofactor">
    <cofactor evidence="1">
        <name>Mg(2+)</name>
        <dbReference type="ChEBI" id="CHEBI:18420"/>
    </cofactor>
</comment>
<comment type="pathway">
    <text evidence="1">Cofactor biosynthesis; coenzyme A biosynthesis; CoA from (R)-pantothenate: step 4/5.</text>
</comment>
<comment type="subunit">
    <text evidence="1">Homohexamer.</text>
</comment>
<comment type="subcellular location">
    <subcellularLocation>
        <location evidence="1">Cytoplasm</location>
    </subcellularLocation>
</comment>
<comment type="similarity">
    <text evidence="1">Belongs to the bacterial CoaD family.</text>
</comment>
<protein>
    <recommendedName>
        <fullName evidence="1">Phosphopantetheine adenylyltransferase</fullName>
        <ecNumber evidence="1">2.7.7.3</ecNumber>
    </recommendedName>
    <alternativeName>
        <fullName evidence="1">Dephospho-CoA pyrophosphorylase</fullName>
    </alternativeName>
    <alternativeName>
        <fullName evidence="1">Pantetheine-phosphate adenylyltransferase</fullName>
        <shortName evidence="1">PPAT</shortName>
    </alternativeName>
</protein>
<name>COAD_PSEPK</name>
<sequence length="161" mass="17994">MNRVLYPGTFDPITKGHGDLVERASRLFDHVIIAVAASPKKNPLFPLEQRVELAREVTKHLPNVEVIGFSSLLAHFAKEQGANVFLRGLRAVSDFEYEFQLANMNRQLAPDVESLFLTPSERYSFISSTLVREIAALGGDISKFVHPVVADALTERFKKQA</sequence>